<gene>
    <name type="ordered locus">BB_0063</name>
</gene>
<protein>
    <recommendedName>
        <fullName>Uncharacterized protein BB_0063</fullName>
    </recommendedName>
</protein>
<keyword id="KW-0472">Membrane</keyword>
<keyword id="KW-1185">Reference proteome</keyword>
<keyword id="KW-0677">Repeat</keyword>
<keyword id="KW-0812">Transmembrane</keyword>
<keyword id="KW-1133">Transmembrane helix</keyword>
<name>Y063_BORBU</name>
<accession>O51090</accession>
<sequence>MLILPKTTIKALLLVIFGSLIVSFAIFFMVLENNEITVVPNLYSLAIEDAVLELQRKELIPHIEFKFSSSALDKGKVIDQGPKPGTVLRHGNKVIIFISKGAIINRVDSFIGKNIDDVIINLKANSFDNSKLLYHIVQPLEVESELPKGIIISQNPSPGSQISSLTDLQFLISKGKDHLDKHVKNYVGIYYKDAIASLLSDSINFDIDLANIGDFGNIISQSIPPGTKINESDKILITIAKPKVDNKIVFGILTYKLRQHPSYVDISVRLKGVDGKNSLIYSFKSKGGLIKLPYEVNKGSMIELYIYDKLINQTVIN</sequence>
<reference key="1">
    <citation type="journal article" date="1997" name="Nature">
        <title>Genomic sequence of a Lyme disease spirochaete, Borrelia burgdorferi.</title>
        <authorList>
            <person name="Fraser C.M."/>
            <person name="Casjens S."/>
            <person name="Huang W.M."/>
            <person name="Sutton G.G."/>
            <person name="Clayton R.A."/>
            <person name="Lathigra R."/>
            <person name="White O."/>
            <person name="Ketchum K.A."/>
            <person name="Dodson R.J."/>
            <person name="Hickey E.K."/>
            <person name="Gwinn M.L."/>
            <person name="Dougherty B.A."/>
            <person name="Tomb J.-F."/>
            <person name="Fleischmann R.D."/>
            <person name="Richardson D.L."/>
            <person name="Peterson J.D."/>
            <person name="Kerlavage A.R."/>
            <person name="Quackenbush J."/>
            <person name="Salzberg S.L."/>
            <person name="Hanson M."/>
            <person name="van Vugt R."/>
            <person name="Palmer N."/>
            <person name="Adams M.D."/>
            <person name="Gocayne J.D."/>
            <person name="Weidman J.F."/>
            <person name="Utterback T.R."/>
            <person name="Watthey L."/>
            <person name="McDonald L.A."/>
            <person name="Artiach P."/>
            <person name="Bowman C."/>
            <person name="Garland S.A."/>
            <person name="Fujii C."/>
            <person name="Cotton M.D."/>
            <person name="Horst K."/>
            <person name="Roberts K.M."/>
            <person name="Hatch B."/>
            <person name="Smith H.O."/>
            <person name="Venter J.C."/>
        </authorList>
    </citation>
    <scope>NUCLEOTIDE SEQUENCE [LARGE SCALE GENOMIC DNA]</scope>
    <source>
        <strain>ATCC 35210 / DSM 4680 / CIP 102532 / B31</strain>
    </source>
</reference>
<evidence type="ECO:0000255" key="1"/>
<evidence type="ECO:0000255" key="2">
    <source>
        <dbReference type="PROSITE-ProRule" id="PRU00528"/>
    </source>
</evidence>
<evidence type="ECO:0000305" key="3"/>
<proteinExistence type="predicted"/>
<feature type="chain" id="PRO_0000174377" description="Uncharacterized protein BB_0063">
    <location>
        <begin position="1"/>
        <end position="317"/>
    </location>
</feature>
<feature type="transmembrane region" description="Helical" evidence="1">
    <location>
        <begin position="11"/>
        <end position="31"/>
    </location>
</feature>
<feature type="domain" description="PASTA 1" evidence="2">
    <location>
        <begin position="33"/>
        <end position="100"/>
    </location>
</feature>
<feature type="domain" description="PASTA 2" evidence="2">
    <location>
        <begin position="101"/>
        <end position="174"/>
    </location>
</feature>
<feature type="domain" description="PASTA 3" evidence="2">
    <location>
        <begin position="180"/>
        <end position="241"/>
    </location>
</feature>
<dbReference type="EMBL" id="AE000783">
    <property type="protein sequence ID" value="AAC66454.2"/>
    <property type="molecule type" value="Genomic_DNA"/>
</dbReference>
<dbReference type="PIR" id="G70107">
    <property type="entry name" value="G70107"/>
</dbReference>
<dbReference type="RefSeq" id="NP_212197.2">
    <property type="nucleotide sequence ID" value="NC_001318.1"/>
</dbReference>
<dbReference type="SMR" id="O51090"/>
<dbReference type="STRING" id="224326.BB_0063"/>
<dbReference type="PaxDb" id="224326-BB_0063"/>
<dbReference type="EnsemblBacteria" id="AAC66454">
    <property type="protein sequence ID" value="AAC66454"/>
    <property type="gene ID" value="BB_0063"/>
</dbReference>
<dbReference type="KEGG" id="bbu:BB_0063"/>
<dbReference type="PATRIC" id="fig|224326.49.peg.461"/>
<dbReference type="HOGENOM" id="CLU_066816_0_0_12"/>
<dbReference type="OrthoDB" id="367225at2"/>
<dbReference type="Proteomes" id="UP000001807">
    <property type="component" value="Chromosome"/>
</dbReference>
<dbReference type="GO" id="GO:0016020">
    <property type="term" value="C:membrane"/>
    <property type="evidence" value="ECO:0007669"/>
    <property type="project" value="UniProtKB-SubCell"/>
</dbReference>
<dbReference type="CDD" id="cd06577">
    <property type="entry name" value="PASTA_pknB"/>
    <property type="match status" value="2"/>
</dbReference>
<dbReference type="Gene3D" id="3.30.10.20">
    <property type="match status" value="2"/>
</dbReference>
<dbReference type="InterPro" id="IPR005543">
    <property type="entry name" value="PASTA_dom"/>
</dbReference>
<dbReference type="Pfam" id="PF03793">
    <property type="entry name" value="PASTA"/>
    <property type="match status" value="3"/>
</dbReference>
<dbReference type="SMART" id="SM00740">
    <property type="entry name" value="PASTA"/>
    <property type="match status" value="3"/>
</dbReference>
<dbReference type="PROSITE" id="PS51178">
    <property type="entry name" value="PASTA"/>
    <property type="match status" value="3"/>
</dbReference>
<organism>
    <name type="scientific">Borreliella burgdorferi (strain ATCC 35210 / DSM 4680 / CIP 102532 / B31)</name>
    <name type="common">Borrelia burgdorferi</name>
    <dbReference type="NCBI Taxonomy" id="224326"/>
    <lineage>
        <taxon>Bacteria</taxon>
        <taxon>Pseudomonadati</taxon>
        <taxon>Spirochaetota</taxon>
        <taxon>Spirochaetia</taxon>
        <taxon>Spirochaetales</taxon>
        <taxon>Borreliaceae</taxon>
        <taxon>Borreliella</taxon>
    </lineage>
</organism>
<comment type="subcellular location">
    <subcellularLocation>
        <location evidence="3">Membrane</location>
        <topology evidence="3">Single-pass membrane protein</topology>
    </subcellularLocation>
</comment>